<comment type="function">
    <text>This is one of three E.coli hydrogenases synthesized in response to different physiological conditions. HYD2 is involved in hydrogen uptake.</text>
</comment>
<comment type="catalytic activity">
    <reaction>
        <text>H2 + A = AH2</text>
        <dbReference type="Rhea" id="RHEA:12116"/>
        <dbReference type="ChEBI" id="CHEBI:13193"/>
        <dbReference type="ChEBI" id="CHEBI:17499"/>
        <dbReference type="ChEBI" id="CHEBI:18276"/>
        <dbReference type="EC" id="1.12.99.6"/>
    </reaction>
</comment>
<comment type="cofactor">
    <cofactor evidence="1">
        <name>[4Fe-4S] cluster</name>
        <dbReference type="ChEBI" id="CHEBI:49883"/>
    </cofactor>
    <text evidence="1">Binds 2 [4Fe-4S] clusters.</text>
</comment>
<comment type="cofactor">
    <cofactor evidence="1">
        <name>[3Fe-4S] cluster</name>
        <dbReference type="ChEBI" id="CHEBI:21137"/>
    </cofactor>
    <text evidence="1">Binds 1 [3Fe-4S] cluster.</text>
</comment>
<comment type="subunit">
    <text>Heterodimer of a large and a small subunit.</text>
</comment>
<comment type="subcellular location">
    <subcellularLocation>
        <location>Cell membrane</location>
        <topology>Peripheral membrane protein</topology>
        <orientation>Periplasmic side</orientation>
    </subcellularLocation>
    <subcellularLocation>
        <location>Periplasm</location>
    </subcellularLocation>
</comment>
<comment type="PTM">
    <text>Predicted to be exported by the Tat system. The position of the signal peptide cleavage has not been experimentally proven.</text>
</comment>
<comment type="similarity">
    <text evidence="3">Belongs to the [NiFe]/[NiFeSe] hydrogenase small subunit family.</text>
</comment>
<reference key="1">
    <citation type="journal article" date="2002" name="Proc. Natl. Acad. Sci. U.S.A.">
        <title>Extensive mosaic structure revealed by the complete genome sequence of uropathogenic Escherichia coli.</title>
        <authorList>
            <person name="Welch R.A."/>
            <person name="Burland V."/>
            <person name="Plunkett G. III"/>
            <person name="Redford P."/>
            <person name="Roesch P."/>
            <person name="Rasko D."/>
            <person name="Buckles E.L."/>
            <person name="Liou S.-R."/>
            <person name="Boutin A."/>
            <person name="Hackett J."/>
            <person name="Stroud D."/>
            <person name="Mayhew G.F."/>
            <person name="Rose D.J."/>
            <person name="Zhou S."/>
            <person name="Schwartz D.C."/>
            <person name="Perna N.T."/>
            <person name="Mobley H.L.T."/>
            <person name="Donnenberg M.S."/>
            <person name="Blattner F.R."/>
        </authorList>
    </citation>
    <scope>NUCLEOTIDE SEQUENCE [LARGE SCALE GENOMIC DNA]</scope>
    <source>
        <strain>CFT073 / ATCC 700928 / UPEC</strain>
    </source>
</reference>
<evidence type="ECO:0000250" key="1">
    <source>
        <dbReference type="UniProtKB" id="P21853"/>
    </source>
</evidence>
<evidence type="ECO:0000255" key="2">
    <source>
        <dbReference type="PROSITE-ProRule" id="PRU00648"/>
    </source>
</evidence>
<evidence type="ECO:0000305" key="3"/>
<proteinExistence type="inferred from homology"/>
<feature type="signal peptide" description="Tat-type signal" evidence="2">
    <location>
        <begin position="1"/>
        <end position="37"/>
    </location>
</feature>
<feature type="chain" id="PRO_0000013431" description="Hydrogenase-2 small chain">
    <location>
        <begin position="38"/>
        <end position="372"/>
    </location>
</feature>
<feature type="binding site" evidence="1">
    <location>
        <position position="59"/>
    </location>
    <ligand>
        <name>[4Fe-4S] cluster</name>
        <dbReference type="ChEBI" id="CHEBI:49883"/>
        <label>1</label>
    </ligand>
</feature>
<feature type="binding site" evidence="1">
    <location>
        <position position="62"/>
    </location>
    <ligand>
        <name>[4Fe-4S] cluster</name>
        <dbReference type="ChEBI" id="CHEBI:49883"/>
        <label>1</label>
    </ligand>
</feature>
<feature type="binding site" evidence="1">
    <location>
        <position position="157"/>
    </location>
    <ligand>
        <name>[4Fe-4S] cluster</name>
        <dbReference type="ChEBI" id="CHEBI:49883"/>
        <label>1</label>
    </ligand>
</feature>
<feature type="binding site" evidence="1">
    <location>
        <position position="191"/>
    </location>
    <ligand>
        <name>[4Fe-4S] cluster</name>
        <dbReference type="ChEBI" id="CHEBI:49883"/>
        <label>1</label>
    </ligand>
</feature>
<feature type="binding site" evidence="1">
    <location>
        <position position="229"/>
    </location>
    <ligand>
        <name>[4Fe-4S] cluster</name>
        <dbReference type="ChEBI" id="CHEBI:49883"/>
        <label>2</label>
    </ligand>
</feature>
<feature type="binding site" evidence="1">
    <location>
        <position position="232"/>
    </location>
    <ligand>
        <name>[4Fe-4S] cluster</name>
        <dbReference type="ChEBI" id="CHEBI:49883"/>
        <label>2</label>
    </ligand>
</feature>
<feature type="binding site" evidence="1">
    <location>
        <position position="257"/>
    </location>
    <ligand>
        <name>[4Fe-4S] cluster</name>
        <dbReference type="ChEBI" id="CHEBI:49883"/>
        <label>2</label>
    </ligand>
</feature>
<feature type="binding site" evidence="1">
    <location>
        <position position="263"/>
    </location>
    <ligand>
        <name>[4Fe-4S] cluster</name>
        <dbReference type="ChEBI" id="CHEBI:49883"/>
        <label>2</label>
    </ligand>
</feature>
<feature type="binding site" evidence="1">
    <location>
        <position position="272"/>
    </location>
    <ligand>
        <name>[3Fe-4S] cluster</name>
        <dbReference type="ChEBI" id="CHEBI:21137"/>
    </ligand>
</feature>
<feature type="binding site" evidence="1">
    <location>
        <position position="292"/>
    </location>
    <ligand>
        <name>[3Fe-4S] cluster</name>
        <dbReference type="ChEBI" id="CHEBI:21137"/>
    </ligand>
</feature>
<feature type="binding site" evidence="1">
    <location>
        <position position="295"/>
    </location>
    <ligand>
        <name>[3Fe-4S] cluster</name>
        <dbReference type="ChEBI" id="CHEBI:21137"/>
    </ligand>
</feature>
<organism>
    <name type="scientific">Escherichia coli O6:H1 (strain CFT073 / ATCC 700928 / UPEC)</name>
    <dbReference type="NCBI Taxonomy" id="199310"/>
    <lineage>
        <taxon>Bacteria</taxon>
        <taxon>Pseudomonadati</taxon>
        <taxon>Pseudomonadota</taxon>
        <taxon>Gammaproteobacteria</taxon>
        <taxon>Enterobacterales</taxon>
        <taxon>Enterobacteriaceae</taxon>
        <taxon>Escherichia</taxon>
    </lineage>
</organism>
<dbReference type="EC" id="1.12.99.6"/>
<dbReference type="EMBL" id="AE014075">
    <property type="protein sequence ID" value="AAN82178.1"/>
    <property type="molecule type" value="Genomic_DNA"/>
</dbReference>
<dbReference type="RefSeq" id="WP_000145410.1">
    <property type="nucleotide sequence ID" value="NZ_CP051263.1"/>
</dbReference>
<dbReference type="SMR" id="P69742"/>
<dbReference type="STRING" id="199310.c3734"/>
<dbReference type="GeneID" id="93778988"/>
<dbReference type="KEGG" id="ecc:c3734"/>
<dbReference type="eggNOG" id="COG1740">
    <property type="taxonomic scope" value="Bacteria"/>
</dbReference>
<dbReference type="HOGENOM" id="CLU_046107_0_1_6"/>
<dbReference type="BioCyc" id="ECOL199310:C3734-MONOMER"/>
<dbReference type="Proteomes" id="UP000001410">
    <property type="component" value="Chromosome"/>
</dbReference>
<dbReference type="GO" id="GO:0044569">
    <property type="term" value="C:[Ni-Fe] hydrogenase complex"/>
    <property type="evidence" value="ECO:0007669"/>
    <property type="project" value="TreeGrafter"/>
</dbReference>
<dbReference type="GO" id="GO:0009375">
    <property type="term" value="C:ferredoxin hydrogenase complex"/>
    <property type="evidence" value="ECO:0007669"/>
    <property type="project" value="InterPro"/>
</dbReference>
<dbReference type="GO" id="GO:0042597">
    <property type="term" value="C:periplasmic space"/>
    <property type="evidence" value="ECO:0007669"/>
    <property type="project" value="UniProtKB-SubCell"/>
</dbReference>
<dbReference type="GO" id="GO:0005886">
    <property type="term" value="C:plasma membrane"/>
    <property type="evidence" value="ECO:0007669"/>
    <property type="project" value="UniProtKB-SubCell"/>
</dbReference>
<dbReference type="GO" id="GO:0051538">
    <property type="term" value="F:3 iron, 4 sulfur cluster binding"/>
    <property type="evidence" value="ECO:0007669"/>
    <property type="project" value="UniProtKB-KW"/>
</dbReference>
<dbReference type="GO" id="GO:0051539">
    <property type="term" value="F:4 iron, 4 sulfur cluster binding"/>
    <property type="evidence" value="ECO:0007669"/>
    <property type="project" value="UniProtKB-KW"/>
</dbReference>
<dbReference type="GO" id="GO:0009055">
    <property type="term" value="F:electron transfer activity"/>
    <property type="evidence" value="ECO:0007669"/>
    <property type="project" value="TreeGrafter"/>
</dbReference>
<dbReference type="GO" id="GO:0008901">
    <property type="term" value="F:ferredoxin hydrogenase activity"/>
    <property type="evidence" value="ECO:0007669"/>
    <property type="project" value="InterPro"/>
</dbReference>
<dbReference type="GO" id="GO:0033748">
    <property type="term" value="F:hydrogenase (acceptor) activity"/>
    <property type="evidence" value="ECO:0007669"/>
    <property type="project" value="UniProtKB-EC"/>
</dbReference>
<dbReference type="GO" id="GO:0046872">
    <property type="term" value="F:metal ion binding"/>
    <property type="evidence" value="ECO:0007669"/>
    <property type="project" value="UniProtKB-KW"/>
</dbReference>
<dbReference type="GO" id="GO:0009061">
    <property type="term" value="P:anaerobic respiration"/>
    <property type="evidence" value="ECO:0007669"/>
    <property type="project" value="TreeGrafter"/>
</dbReference>
<dbReference type="FunFam" id="3.40.50.700:FF:000001">
    <property type="entry name" value="Hydrogenase 2 small subunit"/>
    <property type="match status" value="1"/>
</dbReference>
<dbReference type="FunFam" id="4.10.480.10:FF:000001">
    <property type="entry name" value="Hydrogenase 2 small subunit"/>
    <property type="match status" value="1"/>
</dbReference>
<dbReference type="Gene3D" id="4.10.480.10">
    <property type="entry name" value="Cytochrome-c3 hydrogenase, C-terminal domain"/>
    <property type="match status" value="1"/>
</dbReference>
<dbReference type="Gene3D" id="3.40.50.700">
    <property type="entry name" value="NADH:ubiquinone oxidoreductase-like, 20kDa subunit"/>
    <property type="match status" value="1"/>
</dbReference>
<dbReference type="InterPro" id="IPR027394">
    <property type="entry name" value="Cytochrome-c3_hydrogenase_C"/>
</dbReference>
<dbReference type="InterPro" id="IPR006137">
    <property type="entry name" value="NADH_UbQ_OxRdtase-like_20kDa"/>
</dbReference>
<dbReference type="InterPro" id="IPR037148">
    <property type="entry name" value="NiFe-Hase_small_C_sf"/>
</dbReference>
<dbReference type="InterPro" id="IPR037024">
    <property type="entry name" value="NiFe_Hase_small_N_sf"/>
</dbReference>
<dbReference type="InterPro" id="IPR001821">
    <property type="entry name" value="NiFe_hydrogenase_ssu"/>
</dbReference>
<dbReference type="InterPro" id="IPR006311">
    <property type="entry name" value="TAT_signal"/>
</dbReference>
<dbReference type="InterPro" id="IPR019546">
    <property type="entry name" value="TAT_signal_bac_arc"/>
</dbReference>
<dbReference type="NCBIfam" id="TIGR00391">
    <property type="entry name" value="hydA"/>
    <property type="match status" value="1"/>
</dbReference>
<dbReference type="NCBIfam" id="NF007779">
    <property type="entry name" value="PRK10468.1"/>
    <property type="match status" value="1"/>
</dbReference>
<dbReference type="NCBIfam" id="TIGR01409">
    <property type="entry name" value="TAT_signal_seq"/>
    <property type="match status" value="1"/>
</dbReference>
<dbReference type="PANTHER" id="PTHR30013:SF7">
    <property type="entry name" value="HYDROGENASE-2 SMALL CHAIN"/>
    <property type="match status" value="1"/>
</dbReference>
<dbReference type="PANTHER" id="PTHR30013">
    <property type="entry name" value="NIFE / NIFESE HYDROGENASE SMALL SUBUNIT FAMILY MEMBER"/>
    <property type="match status" value="1"/>
</dbReference>
<dbReference type="Pfam" id="PF14720">
    <property type="entry name" value="NiFe_hyd_SSU_C"/>
    <property type="match status" value="1"/>
</dbReference>
<dbReference type="Pfam" id="PF01058">
    <property type="entry name" value="Oxidored_q6"/>
    <property type="match status" value="1"/>
</dbReference>
<dbReference type="PIRSF" id="PIRSF000310">
    <property type="entry name" value="NiFe_hyd_ssu"/>
    <property type="match status" value="1"/>
</dbReference>
<dbReference type="PRINTS" id="PR00614">
    <property type="entry name" value="NIHGNASESMLL"/>
</dbReference>
<dbReference type="SUPFAM" id="SSF56770">
    <property type="entry name" value="HydA/Nqo6-like"/>
    <property type="match status" value="1"/>
</dbReference>
<dbReference type="PROSITE" id="PS51318">
    <property type="entry name" value="TAT"/>
    <property type="match status" value="1"/>
</dbReference>
<gene>
    <name type="primary">hybO</name>
    <name type="ordered locus">c3734</name>
</gene>
<accession>P69742</accession>
<accession>Q46847</accession>
<name>MBHT_ECOL6</name>
<sequence>MTGDNTLIHSHGINRRDFMKLCAALAATMGLSSKAAAEMAESVTNPQRPPVIWIGAQECTGCTESLLRATHPTVENLVLETISLEYHEVLSAAFGHQVEENKHNALEKYKGQYVLVVDGSIPLKDNGIYCMVAGEPIVDHIRKAAEGAAAIIAIGSCSAWGGVAAAGVNPTGAVSLQEVLPGKTVINIPGCPPNPHNFLATVAHIITYGKPPKLDDKNRPTFAYGRLIHEHCERRPHFDAGRFAKEFGDEGHREGWCLYHLGCKGPETYGNCSTLQFCDVGGVWPVAIGHPCYGCNEEGIGFHKGIHQLANVENQTPRSQKPDVNAKEGGNVSAGAIGLLGGVVGLVAGVSVMAVRELGRQQKKDNADSRGE</sequence>
<protein>
    <recommendedName>
        <fullName>Hydrogenase-2 small chain</fullName>
        <shortName>HYD2</shortName>
        <ecNumber>1.12.99.6</ecNumber>
    </recommendedName>
    <alternativeName>
        <fullName>Membrane-bound hydrogenase 2 small subunit</fullName>
    </alternativeName>
    <alternativeName>
        <fullName>NiFe hydrogenase</fullName>
    </alternativeName>
</protein>
<keyword id="KW-0003">3Fe-4S</keyword>
<keyword id="KW-0004">4Fe-4S</keyword>
<keyword id="KW-1003">Cell membrane</keyword>
<keyword id="KW-0408">Iron</keyword>
<keyword id="KW-0411">Iron-sulfur</keyword>
<keyword id="KW-0472">Membrane</keyword>
<keyword id="KW-0479">Metal-binding</keyword>
<keyword id="KW-0560">Oxidoreductase</keyword>
<keyword id="KW-0574">Periplasm</keyword>
<keyword id="KW-1185">Reference proteome</keyword>
<keyword id="KW-0732">Signal</keyword>